<sequence length="181" mass="19661">MRCPFCRHPDSRVVDSREAEEGSAIRRRRSCLSCGRRFTTMEEASLQVRKRSGAAEPFSRAKVIAGVRKACQGRPVRDDDLALLAQRVEDAVRSSGSAEVPAEAIGRAILGPLRELDEVAYLRFASVYLAFESLTDFESAIAALRSEAAGPPTTRDGPARPVPRGAVDVSPVIGTQQVHSR</sequence>
<protein>
    <recommendedName>
        <fullName evidence="1">Transcriptional repressor NrdR</fullName>
    </recommendedName>
</protein>
<organism>
    <name type="scientific">Frankia casuarinae (strain DSM 45818 / CECT 9043 / HFP020203 / CcI3)</name>
    <dbReference type="NCBI Taxonomy" id="106370"/>
    <lineage>
        <taxon>Bacteria</taxon>
        <taxon>Bacillati</taxon>
        <taxon>Actinomycetota</taxon>
        <taxon>Actinomycetes</taxon>
        <taxon>Frankiales</taxon>
        <taxon>Frankiaceae</taxon>
        <taxon>Frankia</taxon>
    </lineage>
</organism>
<reference key="1">
    <citation type="journal article" date="2007" name="Genome Res.">
        <title>Genome characteristics of facultatively symbiotic Frankia sp. strains reflect host range and host plant biogeography.</title>
        <authorList>
            <person name="Normand P."/>
            <person name="Lapierre P."/>
            <person name="Tisa L.S."/>
            <person name="Gogarten J.P."/>
            <person name="Alloisio N."/>
            <person name="Bagnarol E."/>
            <person name="Bassi C.A."/>
            <person name="Berry A.M."/>
            <person name="Bickhart D.M."/>
            <person name="Choisne N."/>
            <person name="Couloux A."/>
            <person name="Cournoyer B."/>
            <person name="Cruveiller S."/>
            <person name="Daubin V."/>
            <person name="Demange N."/>
            <person name="Francino M.P."/>
            <person name="Goltsman E."/>
            <person name="Huang Y."/>
            <person name="Kopp O.R."/>
            <person name="Labarre L."/>
            <person name="Lapidus A."/>
            <person name="Lavire C."/>
            <person name="Marechal J."/>
            <person name="Martinez M."/>
            <person name="Mastronunzio J.E."/>
            <person name="Mullin B.C."/>
            <person name="Niemann J."/>
            <person name="Pujic P."/>
            <person name="Rawnsley T."/>
            <person name="Rouy Z."/>
            <person name="Schenowitz C."/>
            <person name="Sellstedt A."/>
            <person name="Tavares F."/>
            <person name="Tomkins J.P."/>
            <person name="Vallenet D."/>
            <person name="Valverde C."/>
            <person name="Wall L.G."/>
            <person name="Wang Y."/>
            <person name="Medigue C."/>
            <person name="Benson D.R."/>
        </authorList>
    </citation>
    <scope>NUCLEOTIDE SEQUENCE [LARGE SCALE GENOMIC DNA]</scope>
    <source>
        <strain>DSM 45818 / CECT 9043 / HFP020203 / CcI3</strain>
    </source>
</reference>
<proteinExistence type="inferred from homology"/>
<comment type="function">
    <text evidence="1">Negatively regulates transcription of bacterial ribonucleotide reductase nrd genes and operons by binding to NrdR-boxes.</text>
</comment>
<comment type="cofactor">
    <cofactor evidence="1">
        <name>Zn(2+)</name>
        <dbReference type="ChEBI" id="CHEBI:29105"/>
    </cofactor>
    <text evidence="1">Binds 1 zinc ion.</text>
</comment>
<comment type="similarity">
    <text evidence="1">Belongs to the NrdR family.</text>
</comment>
<accession>Q2J781</accession>
<evidence type="ECO:0000255" key="1">
    <source>
        <dbReference type="HAMAP-Rule" id="MF_00440"/>
    </source>
</evidence>
<evidence type="ECO:0000256" key="2">
    <source>
        <dbReference type="SAM" id="MobiDB-lite"/>
    </source>
</evidence>
<name>NRDR_FRACC</name>
<feature type="chain" id="PRO_0000264177" description="Transcriptional repressor NrdR">
    <location>
        <begin position="1"/>
        <end position="181"/>
    </location>
</feature>
<feature type="domain" description="ATP-cone" evidence="1">
    <location>
        <begin position="46"/>
        <end position="136"/>
    </location>
</feature>
<feature type="zinc finger region" evidence="1">
    <location>
        <begin position="3"/>
        <end position="34"/>
    </location>
</feature>
<feature type="region of interest" description="Disordered" evidence="2">
    <location>
        <begin position="148"/>
        <end position="181"/>
    </location>
</feature>
<keyword id="KW-0067">ATP-binding</keyword>
<keyword id="KW-0238">DNA-binding</keyword>
<keyword id="KW-0479">Metal-binding</keyword>
<keyword id="KW-0547">Nucleotide-binding</keyword>
<keyword id="KW-1185">Reference proteome</keyword>
<keyword id="KW-0678">Repressor</keyword>
<keyword id="KW-0804">Transcription</keyword>
<keyword id="KW-0805">Transcription regulation</keyword>
<keyword id="KW-0862">Zinc</keyword>
<keyword id="KW-0863">Zinc-finger</keyword>
<dbReference type="EMBL" id="CP000249">
    <property type="protein sequence ID" value="ABD12861.1"/>
    <property type="molecule type" value="Genomic_DNA"/>
</dbReference>
<dbReference type="RefSeq" id="WP_011437886.1">
    <property type="nucleotide sequence ID" value="NZ_LRTJ01000037.1"/>
</dbReference>
<dbReference type="SMR" id="Q2J781"/>
<dbReference type="STRING" id="106370.Francci3_3508"/>
<dbReference type="KEGG" id="fra:Francci3_3508"/>
<dbReference type="eggNOG" id="COG1327">
    <property type="taxonomic scope" value="Bacteria"/>
</dbReference>
<dbReference type="HOGENOM" id="CLU_108412_1_0_11"/>
<dbReference type="OrthoDB" id="9807461at2"/>
<dbReference type="PhylomeDB" id="Q2J781"/>
<dbReference type="Proteomes" id="UP000001937">
    <property type="component" value="Chromosome"/>
</dbReference>
<dbReference type="GO" id="GO:0005524">
    <property type="term" value="F:ATP binding"/>
    <property type="evidence" value="ECO:0007669"/>
    <property type="project" value="UniProtKB-KW"/>
</dbReference>
<dbReference type="GO" id="GO:0003677">
    <property type="term" value="F:DNA binding"/>
    <property type="evidence" value="ECO:0007669"/>
    <property type="project" value="UniProtKB-KW"/>
</dbReference>
<dbReference type="GO" id="GO:0008270">
    <property type="term" value="F:zinc ion binding"/>
    <property type="evidence" value="ECO:0007669"/>
    <property type="project" value="UniProtKB-UniRule"/>
</dbReference>
<dbReference type="GO" id="GO:0045892">
    <property type="term" value="P:negative regulation of DNA-templated transcription"/>
    <property type="evidence" value="ECO:0007669"/>
    <property type="project" value="UniProtKB-UniRule"/>
</dbReference>
<dbReference type="HAMAP" id="MF_00440">
    <property type="entry name" value="NrdR"/>
    <property type="match status" value="1"/>
</dbReference>
<dbReference type="InterPro" id="IPR005144">
    <property type="entry name" value="ATP-cone_dom"/>
</dbReference>
<dbReference type="InterPro" id="IPR055173">
    <property type="entry name" value="NrdR-like_N"/>
</dbReference>
<dbReference type="InterPro" id="IPR003796">
    <property type="entry name" value="RNR_NrdR-like"/>
</dbReference>
<dbReference type="NCBIfam" id="TIGR00244">
    <property type="entry name" value="transcriptional regulator NrdR"/>
    <property type="match status" value="1"/>
</dbReference>
<dbReference type="PANTHER" id="PTHR30455">
    <property type="entry name" value="TRANSCRIPTIONAL REPRESSOR NRDR"/>
    <property type="match status" value="1"/>
</dbReference>
<dbReference type="PANTHER" id="PTHR30455:SF2">
    <property type="entry name" value="TRANSCRIPTIONAL REPRESSOR NRDR"/>
    <property type="match status" value="1"/>
</dbReference>
<dbReference type="Pfam" id="PF03477">
    <property type="entry name" value="ATP-cone"/>
    <property type="match status" value="1"/>
</dbReference>
<dbReference type="Pfam" id="PF22811">
    <property type="entry name" value="Zn_ribbon_NrdR"/>
    <property type="match status" value="1"/>
</dbReference>
<dbReference type="PROSITE" id="PS51161">
    <property type="entry name" value="ATP_CONE"/>
    <property type="match status" value="1"/>
</dbReference>
<gene>
    <name evidence="1" type="primary">nrdR</name>
    <name type="ordered locus">Francci3_3508</name>
</gene>